<sequence length="231" mass="25372">MKRAVVVFSGGQDSTTCLIQALQHYDDVHCITFDYGQRHRAEIDIARELSLKLGATAHKVLDVGLLNELATSSLTRDSIPVPDYDANAQGIPNTFVPGRNILFLTLASIYAYQVGAEAVITGVCETDFSGYPDCRDEFVKALNQAIVLGIARDIRFETPLMWLNKAETWALADYYQQLDTVRYHTLTCYNGIKGDGCGQCAACHLRANGLAQYQNDSAAVMASLKQKAGLR</sequence>
<proteinExistence type="inferred from homology"/>
<feature type="chain" id="PRO_1000215796" description="7-cyano-7-deazaguanine synthase">
    <location>
        <begin position="1"/>
        <end position="231"/>
    </location>
</feature>
<feature type="binding site" evidence="1">
    <location>
        <begin position="8"/>
        <end position="18"/>
    </location>
    <ligand>
        <name>ATP</name>
        <dbReference type="ChEBI" id="CHEBI:30616"/>
    </ligand>
</feature>
<feature type="binding site" evidence="1">
    <location>
        <position position="188"/>
    </location>
    <ligand>
        <name>Zn(2+)</name>
        <dbReference type="ChEBI" id="CHEBI:29105"/>
    </ligand>
</feature>
<feature type="binding site" evidence="1">
    <location>
        <position position="197"/>
    </location>
    <ligand>
        <name>Zn(2+)</name>
        <dbReference type="ChEBI" id="CHEBI:29105"/>
    </ligand>
</feature>
<feature type="binding site" evidence="1">
    <location>
        <position position="200"/>
    </location>
    <ligand>
        <name>Zn(2+)</name>
        <dbReference type="ChEBI" id="CHEBI:29105"/>
    </ligand>
</feature>
<feature type="binding site" evidence="1">
    <location>
        <position position="203"/>
    </location>
    <ligand>
        <name>Zn(2+)</name>
        <dbReference type="ChEBI" id="CHEBI:29105"/>
    </ligand>
</feature>
<keyword id="KW-0067">ATP-binding</keyword>
<keyword id="KW-0436">Ligase</keyword>
<keyword id="KW-0479">Metal-binding</keyword>
<keyword id="KW-0547">Nucleotide-binding</keyword>
<keyword id="KW-0671">Queuosine biosynthesis</keyword>
<keyword id="KW-0862">Zinc</keyword>
<evidence type="ECO:0000255" key="1">
    <source>
        <dbReference type="HAMAP-Rule" id="MF_01633"/>
    </source>
</evidence>
<protein>
    <recommendedName>
        <fullName evidence="1">7-cyano-7-deazaguanine synthase</fullName>
        <ecNumber evidence="1">6.3.4.20</ecNumber>
    </recommendedName>
    <alternativeName>
        <fullName evidence="1">7-cyano-7-carbaguanine synthase</fullName>
    </alternativeName>
    <alternativeName>
        <fullName evidence="1">PreQ(0) synthase</fullName>
    </alternativeName>
    <alternativeName>
        <fullName evidence="1">Queuosine biosynthesis protein QueC</fullName>
    </alternativeName>
</protein>
<comment type="function">
    <text evidence="1">Catalyzes the ATP-dependent conversion of 7-carboxy-7-deazaguanine (CDG) to 7-cyano-7-deazaguanine (preQ(0)).</text>
</comment>
<comment type="catalytic activity">
    <reaction evidence="1">
        <text>7-carboxy-7-deazaguanine + NH4(+) + ATP = 7-cyano-7-deazaguanine + ADP + phosphate + H2O + H(+)</text>
        <dbReference type="Rhea" id="RHEA:27982"/>
        <dbReference type="ChEBI" id="CHEBI:15377"/>
        <dbReference type="ChEBI" id="CHEBI:15378"/>
        <dbReference type="ChEBI" id="CHEBI:28938"/>
        <dbReference type="ChEBI" id="CHEBI:30616"/>
        <dbReference type="ChEBI" id="CHEBI:43474"/>
        <dbReference type="ChEBI" id="CHEBI:45075"/>
        <dbReference type="ChEBI" id="CHEBI:61036"/>
        <dbReference type="ChEBI" id="CHEBI:456216"/>
        <dbReference type="EC" id="6.3.4.20"/>
    </reaction>
</comment>
<comment type="cofactor">
    <cofactor evidence="1">
        <name>Zn(2+)</name>
        <dbReference type="ChEBI" id="CHEBI:29105"/>
    </cofactor>
    <text evidence="1">Binds 1 zinc ion per subunit.</text>
</comment>
<comment type="pathway">
    <text evidence="1">Purine metabolism; 7-cyano-7-deazaguanine biosynthesis.</text>
</comment>
<comment type="similarity">
    <text evidence="1">Belongs to the QueC family.</text>
</comment>
<reference key="1">
    <citation type="submission" date="2009-07" db="EMBL/GenBank/DDBJ databases">
        <title>Complete sequence of Pectobacterium carotovorum subsp. carotovorum PC1.</title>
        <authorList>
            <consortium name="US DOE Joint Genome Institute"/>
            <person name="Lucas S."/>
            <person name="Copeland A."/>
            <person name="Lapidus A."/>
            <person name="Glavina del Rio T."/>
            <person name="Tice H."/>
            <person name="Bruce D."/>
            <person name="Goodwin L."/>
            <person name="Pitluck S."/>
            <person name="Munk A.C."/>
            <person name="Brettin T."/>
            <person name="Detter J.C."/>
            <person name="Han C."/>
            <person name="Tapia R."/>
            <person name="Larimer F."/>
            <person name="Land M."/>
            <person name="Hauser L."/>
            <person name="Kyrpides N."/>
            <person name="Mikhailova N."/>
            <person name="Balakrishnan V."/>
            <person name="Glasner J."/>
            <person name="Perna N.T."/>
        </authorList>
    </citation>
    <scope>NUCLEOTIDE SEQUENCE [LARGE SCALE GENOMIC DNA]</scope>
    <source>
        <strain>PC1</strain>
    </source>
</reference>
<name>QUEC_PECCP</name>
<dbReference type="EC" id="6.3.4.20" evidence="1"/>
<dbReference type="EMBL" id="CP001657">
    <property type="protein sequence ID" value="ACT12104.1"/>
    <property type="molecule type" value="Genomic_DNA"/>
</dbReference>
<dbReference type="RefSeq" id="WP_015839352.1">
    <property type="nucleotide sequence ID" value="NC_012917.1"/>
</dbReference>
<dbReference type="SMR" id="C6DB62"/>
<dbReference type="STRING" id="561230.PC1_1055"/>
<dbReference type="KEGG" id="pct:PC1_1055"/>
<dbReference type="eggNOG" id="COG0603">
    <property type="taxonomic scope" value="Bacteria"/>
</dbReference>
<dbReference type="HOGENOM" id="CLU_081854_0_0_6"/>
<dbReference type="OrthoDB" id="9789567at2"/>
<dbReference type="UniPathway" id="UPA00391"/>
<dbReference type="Proteomes" id="UP000002736">
    <property type="component" value="Chromosome"/>
</dbReference>
<dbReference type="GO" id="GO:0005524">
    <property type="term" value="F:ATP binding"/>
    <property type="evidence" value="ECO:0007669"/>
    <property type="project" value="UniProtKB-UniRule"/>
</dbReference>
<dbReference type="GO" id="GO:0016879">
    <property type="term" value="F:ligase activity, forming carbon-nitrogen bonds"/>
    <property type="evidence" value="ECO:0007669"/>
    <property type="project" value="UniProtKB-UniRule"/>
</dbReference>
<dbReference type="GO" id="GO:0008270">
    <property type="term" value="F:zinc ion binding"/>
    <property type="evidence" value="ECO:0007669"/>
    <property type="project" value="UniProtKB-UniRule"/>
</dbReference>
<dbReference type="GO" id="GO:0008616">
    <property type="term" value="P:queuosine biosynthetic process"/>
    <property type="evidence" value="ECO:0007669"/>
    <property type="project" value="UniProtKB-UniRule"/>
</dbReference>
<dbReference type="CDD" id="cd01995">
    <property type="entry name" value="QueC-like"/>
    <property type="match status" value="1"/>
</dbReference>
<dbReference type="FunFam" id="3.40.50.620:FF:000017">
    <property type="entry name" value="7-cyano-7-deazaguanine synthase"/>
    <property type="match status" value="1"/>
</dbReference>
<dbReference type="Gene3D" id="3.40.50.620">
    <property type="entry name" value="HUPs"/>
    <property type="match status" value="1"/>
</dbReference>
<dbReference type="HAMAP" id="MF_01633">
    <property type="entry name" value="QueC"/>
    <property type="match status" value="1"/>
</dbReference>
<dbReference type="InterPro" id="IPR018317">
    <property type="entry name" value="QueC"/>
</dbReference>
<dbReference type="InterPro" id="IPR014729">
    <property type="entry name" value="Rossmann-like_a/b/a_fold"/>
</dbReference>
<dbReference type="NCBIfam" id="TIGR00364">
    <property type="entry name" value="7-cyano-7-deazaguanine synthase QueC"/>
    <property type="match status" value="1"/>
</dbReference>
<dbReference type="NCBIfam" id="NF008317">
    <property type="entry name" value="PRK11106.1"/>
    <property type="match status" value="1"/>
</dbReference>
<dbReference type="PANTHER" id="PTHR42914">
    <property type="entry name" value="7-CYANO-7-DEAZAGUANINE SYNTHASE"/>
    <property type="match status" value="1"/>
</dbReference>
<dbReference type="PANTHER" id="PTHR42914:SF1">
    <property type="entry name" value="7-CYANO-7-DEAZAGUANINE SYNTHASE"/>
    <property type="match status" value="1"/>
</dbReference>
<dbReference type="Pfam" id="PF06508">
    <property type="entry name" value="QueC"/>
    <property type="match status" value="1"/>
</dbReference>
<dbReference type="PIRSF" id="PIRSF006293">
    <property type="entry name" value="ExsB"/>
    <property type="match status" value="1"/>
</dbReference>
<dbReference type="SUPFAM" id="SSF52402">
    <property type="entry name" value="Adenine nucleotide alpha hydrolases-like"/>
    <property type="match status" value="1"/>
</dbReference>
<gene>
    <name evidence="1" type="primary">queC</name>
    <name type="ordered locus">PC1_1055</name>
</gene>
<organism>
    <name type="scientific">Pectobacterium carotovorum subsp. carotovorum (strain PC1)</name>
    <dbReference type="NCBI Taxonomy" id="561230"/>
    <lineage>
        <taxon>Bacteria</taxon>
        <taxon>Pseudomonadati</taxon>
        <taxon>Pseudomonadota</taxon>
        <taxon>Gammaproteobacteria</taxon>
        <taxon>Enterobacterales</taxon>
        <taxon>Pectobacteriaceae</taxon>
        <taxon>Pectobacterium</taxon>
    </lineage>
</organism>
<accession>C6DB62</accession>